<protein>
    <recommendedName>
        <fullName evidence="1">Adenylosuccinate synthetase</fullName>
        <shortName evidence="1">AMPSase</shortName>
        <shortName evidence="1">AdSS</shortName>
        <ecNumber evidence="1">6.3.4.4</ecNumber>
    </recommendedName>
    <alternativeName>
        <fullName evidence="1">IMP--aspartate ligase</fullName>
    </alternativeName>
</protein>
<organism>
    <name type="scientific">Leifsonia xyli subsp. xyli (strain CTCB07)</name>
    <dbReference type="NCBI Taxonomy" id="281090"/>
    <lineage>
        <taxon>Bacteria</taxon>
        <taxon>Bacillati</taxon>
        <taxon>Actinomycetota</taxon>
        <taxon>Actinomycetes</taxon>
        <taxon>Micrococcales</taxon>
        <taxon>Microbacteriaceae</taxon>
        <taxon>Leifsonia</taxon>
    </lineage>
</organism>
<reference key="1">
    <citation type="journal article" date="2004" name="Mol. Plant Microbe Interact.">
        <title>The genome sequence of the Gram-positive sugarcane pathogen Leifsonia xyli subsp. xyli.</title>
        <authorList>
            <person name="Monteiro-Vitorello C.B."/>
            <person name="Camargo L.E.A."/>
            <person name="Van Sluys M.A."/>
            <person name="Kitajima J.P."/>
            <person name="Truffi D."/>
            <person name="do Amaral A.M."/>
            <person name="Harakava R."/>
            <person name="de Oliveira J.C.F."/>
            <person name="Wood D."/>
            <person name="de Oliveira M.C."/>
            <person name="Miyaki C.Y."/>
            <person name="Takita M.A."/>
            <person name="da Silva A.C.R."/>
            <person name="Furlan L.R."/>
            <person name="Carraro D.M."/>
            <person name="Camarotte G."/>
            <person name="Almeida N.F. Jr."/>
            <person name="Carrer H."/>
            <person name="Coutinho L.L."/>
            <person name="El-Dorry H.A."/>
            <person name="Ferro M.I.T."/>
            <person name="Gagliardi P.R."/>
            <person name="Giglioti E."/>
            <person name="Goldman M.H.S."/>
            <person name="Goldman G.H."/>
            <person name="Kimura E.T."/>
            <person name="Ferro E.S."/>
            <person name="Kuramae E.E."/>
            <person name="Lemos E.G.M."/>
            <person name="Lemos M.V.F."/>
            <person name="Mauro S.M.Z."/>
            <person name="Machado M.A."/>
            <person name="Marino C.L."/>
            <person name="Menck C.F."/>
            <person name="Nunes L.R."/>
            <person name="Oliveira R.C."/>
            <person name="Pereira G.G."/>
            <person name="Siqueira W."/>
            <person name="de Souza A.A."/>
            <person name="Tsai S.M."/>
            <person name="Zanca A.S."/>
            <person name="Simpson A.J.G."/>
            <person name="Brumbley S.M."/>
            <person name="Setubal J.C."/>
        </authorList>
    </citation>
    <scope>NUCLEOTIDE SEQUENCE [LARGE SCALE GENOMIC DNA]</scope>
    <source>
        <strain>CTCB07</strain>
    </source>
</reference>
<gene>
    <name evidence="1" type="primary">purA</name>
    <name type="ordered locus">Lxx23290</name>
</gene>
<comment type="function">
    <text evidence="1">Plays an important role in the de novo pathway of purine nucleotide biosynthesis. Catalyzes the first committed step in the biosynthesis of AMP from IMP.</text>
</comment>
<comment type="catalytic activity">
    <reaction evidence="1">
        <text>IMP + L-aspartate + GTP = N(6)-(1,2-dicarboxyethyl)-AMP + GDP + phosphate + 2 H(+)</text>
        <dbReference type="Rhea" id="RHEA:15753"/>
        <dbReference type="ChEBI" id="CHEBI:15378"/>
        <dbReference type="ChEBI" id="CHEBI:29991"/>
        <dbReference type="ChEBI" id="CHEBI:37565"/>
        <dbReference type="ChEBI" id="CHEBI:43474"/>
        <dbReference type="ChEBI" id="CHEBI:57567"/>
        <dbReference type="ChEBI" id="CHEBI:58053"/>
        <dbReference type="ChEBI" id="CHEBI:58189"/>
        <dbReference type="EC" id="6.3.4.4"/>
    </reaction>
</comment>
<comment type="cofactor">
    <cofactor evidence="1">
        <name>Mg(2+)</name>
        <dbReference type="ChEBI" id="CHEBI:18420"/>
    </cofactor>
    <text evidence="1">Binds 1 Mg(2+) ion per subunit.</text>
</comment>
<comment type="pathway">
    <text evidence="1">Purine metabolism; AMP biosynthesis via de novo pathway; AMP from IMP: step 1/2.</text>
</comment>
<comment type="subunit">
    <text evidence="1">Homodimer.</text>
</comment>
<comment type="subcellular location">
    <subcellularLocation>
        <location evidence="1">Cytoplasm</location>
    </subcellularLocation>
</comment>
<comment type="similarity">
    <text evidence="1">Belongs to the adenylosuccinate synthetase family.</text>
</comment>
<feature type="chain" id="PRO_0000095191" description="Adenylosuccinate synthetase">
    <location>
        <begin position="1"/>
        <end position="438"/>
    </location>
</feature>
<feature type="active site" description="Proton acceptor" evidence="1">
    <location>
        <position position="13"/>
    </location>
</feature>
<feature type="active site" description="Proton donor" evidence="1">
    <location>
        <position position="41"/>
    </location>
</feature>
<feature type="binding site" evidence="1">
    <location>
        <begin position="12"/>
        <end position="18"/>
    </location>
    <ligand>
        <name>GTP</name>
        <dbReference type="ChEBI" id="CHEBI:37565"/>
    </ligand>
</feature>
<feature type="binding site" description="in other chain" evidence="1">
    <location>
        <begin position="13"/>
        <end position="16"/>
    </location>
    <ligand>
        <name>IMP</name>
        <dbReference type="ChEBI" id="CHEBI:58053"/>
        <note>ligand shared between dimeric partners</note>
    </ligand>
</feature>
<feature type="binding site" evidence="1">
    <location>
        <position position="13"/>
    </location>
    <ligand>
        <name>Mg(2+)</name>
        <dbReference type="ChEBI" id="CHEBI:18420"/>
    </ligand>
</feature>
<feature type="binding site" description="in other chain" evidence="1">
    <location>
        <begin position="38"/>
        <end position="41"/>
    </location>
    <ligand>
        <name>IMP</name>
        <dbReference type="ChEBI" id="CHEBI:58053"/>
        <note>ligand shared between dimeric partners</note>
    </ligand>
</feature>
<feature type="binding site" evidence="1">
    <location>
        <begin position="40"/>
        <end position="42"/>
    </location>
    <ligand>
        <name>GTP</name>
        <dbReference type="ChEBI" id="CHEBI:37565"/>
    </ligand>
</feature>
<feature type="binding site" evidence="1">
    <location>
        <position position="40"/>
    </location>
    <ligand>
        <name>Mg(2+)</name>
        <dbReference type="ChEBI" id="CHEBI:18420"/>
    </ligand>
</feature>
<feature type="binding site" description="in other chain" evidence="1">
    <location>
        <position position="128"/>
    </location>
    <ligand>
        <name>IMP</name>
        <dbReference type="ChEBI" id="CHEBI:58053"/>
        <note>ligand shared between dimeric partners</note>
    </ligand>
</feature>
<feature type="binding site" evidence="1">
    <location>
        <position position="142"/>
    </location>
    <ligand>
        <name>IMP</name>
        <dbReference type="ChEBI" id="CHEBI:58053"/>
        <note>ligand shared between dimeric partners</note>
    </ligand>
</feature>
<feature type="binding site" description="in other chain" evidence="1">
    <location>
        <position position="223"/>
    </location>
    <ligand>
        <name>IMP</name>
        <dbReference type="ChEBI" id="CHEBI:58053"/>
        <note>ligand shared between dimeric partners</note>
    </ligand>
</feature>
<feature type="binding site" description="in other chain" evidence="1">
    <location>
        <position position="238"/>
    </location>
    <ligand>
        <name>IMP</name>
        <dbReference type="ChEBI" id="CHEBI:58053"/>
        <note>ligand shared between dimeric partners</note>
    </ligand>
</feature>
<feature type="binding site" evidence="1">
    <location>
        <begin position="298"/>
        <end position="304"/>
    </location>
    <ligand>
        <name>substrate</name>
    </ligand>
</feature>
<feature type="binding site" description="in other chain" evidence="1">
    <location>
        <position position="302"/>
    </location>
    <ligand>
        <name>IMP</name>
        <dbReference type="ChEBI" id="CHEBI:58053"/>
        <note>ligand shared between dimeric partners</note>
    </ligand>
</feature>
<feature type="binding site" evidence="1">
    <location>
        <position position="304"/>
    </location>
    <ligand>
        <name>GTP</name>
        <dbReference type="ChEBI" id="CHEBI:37565"/>
    </ligand>
</feature>
<feature type="binding site" evidence="1">
    <location>
        <begin position="330"/>
        <end position="332"/>
    </location>
    <ligand>
        <name>GTP</name>
        <dbReference type="ChEBI" id="CHEBI:37565"/>
    </ligand>
</feature>
<feature type="binding site" evidence="1">
    <location>
        <begin position="412"/>
        <end position="414"/>
    </location>
    <ligand>
        <name>GTP</name>
        <dbReference type="ChEBI" id="CHEBI:37565"/>
    </ligand>
</feature>
<proteinExistence type="inferred from homology"/>
<keyword id="KW-0963">Cytoplasm</keyword>
<keyword id="KW-0342">GTP-binding</keyword>
<keyword id="KW-0436">Ligase</keyword>
<keyword id="KW-0460">Magnesium</keyword>
<keyword id="KW-0479">Metal-binding</keyword>
<keyword id="KW-0547">Nucleotide-binding</keyword>
<keyword id="KW-0658">Purine biosynthesis</keyword>
<keyword id="KW-1185">Reference proteome</keyword>
<name>PURA_LEIXX</name>
<dbReference type="EC" id="6.3.4.4" evidence="1"/>
<dbReference type="EMBL" id="AE016822">
    <property type="protein sequence ID" value="AAT89983.1"/>
    <property type="molecule type" value="Genomic_DNA"/>
</dbReference>
<dbReference type="RefSeq" id="WP_011186962.1">
    <property type="nucleotide sequence ID" value="NC_006087.1"/>
</dbReference>
<dbReference type="SMR" id="Q6ACB0"/>
<dbReference type="STRING" id="281090.Lxx23290"/>
<dbReference type="KEGG" id="lxx:Lxx23290"/>
<dbReference type="eggNOG" id="COG0104">
    <property type="taxonomic scope" value="Bacteria"/>
</dbReference>
<dbReference type="HOGENOM" id="CLU_029848_0_0_11"/>
<dbReference type="UniPathway" id="UPA00075">
    <property type="reaction ID" value="UER00335"/>
</dbReference>
<dbReference type="Proteomes" id="UP000001306">
    <property type="component" value="Chromosome"/>
</dbReference>
<dbReference type="GO" id="GO:0005737">
    <property type="term" value="C:cytoplasm"/>
    <property type="evidence" value="ECO:0007669"/>
    <property type="project" value="UniProtKB-SubCell"/>
</dbReference>
<dbReference type="GO" id="GO:0004019">
    <property type="term" value="F:adenylosuccinate synthase activity"/>
    <property type="evidence" value="ECO:0007669"/>
    <property type="project" value="UniProtKB-UniRule"/>
</dbReference>
<dbReference type="GO" id="GO:0005525">
    <property type="term" value="F:GTP binding"/>
    <property type="evidence" value="ECO:0007669"/>
    <property type="project" value="UniProtKB-UniRule"/>
</dbReference>
<dbReference type="GO" id="GO:0000287">
    <property type="term" value="F:magnesium ion binding"/>
    <property type="evidence" value="ECO:0007669"/>
    <property type="project" value="UniProtKB-UniRule"/>
</dbReference>
<dbReference type="GO" id="GO:0044208">
    <property type="term" value="P:'de novo' AMP biosynthetic process"/>
    <property type="evidence" value="ECO:0007669"/>
    <property type="project" value="UniProtKB-UniRule"/>
</dbReference>
<dbReference type="GO" id="GO:0046040">
    <property type="term" value="P:IMP metabolic process"/>
    <property type="evidence" value="ECO:0007669"/>
    <property type="project" value="TreeGrafter"/>
</dbReference>
<dbReference type="CDD" id="cd03108">
    <property type="entry name" value="AdSS"/>
    <property type="match status" value="1"/>
</dbReference>
<dbReference type="FunFam" id="1.10.300.10:FF:000001">
    <property type="entry name" value="Adenylosuccinate synthetase"/>
    <property type="match status" value="1"/>
</dbReference>
<dbReference type="FunFam" id="3.90.170.10:FF:000001">
    <property type="entry name" value="Adenylosuccinate synthetase"/>
    <property type="match status" value="1"/>
</dbReference>
<dbReference type="Gene3D" id="3.40.440.10">
    <property type="entry name" value="Adenylosuccinate Synthetase, subunit A, domain 1"/>
    <property type="match status" value="1"/>
</dbReference>
<dbReference type="Gene3D" id="1.10.300.10">
    <property type="entry name" value="Adenylosuccinate Synthetase, subunit A, domain 2"/>
    <property type="match status" value="1"/>
</dbReference>
<dbReference type="Gene3D" id="3.90.170.10">
    <property type="entry name" value="Adenylosuccinate Synthetase, subunit A, domain 3"/>
    <property type="match status" value="1"/>
</dbReference>
<dbReference type="HAMAP" id="MF_00011">
    <property type="entry name" value="Adenylosucc_synth"/>
    <property type="match status" value="1"/>
</dbReference>
<dbReference type="InterPro" id="IPR018220">
    <property type="entry name" value="Adenylosuccin_syn_GTP-bd"/>
</dbReference>
<dbReference type="InterPro" id="IPR033128">
    <property type="entry name" value="Adenylosuccin_syn_Lys_AS"/>
</dbReference>
<dbReference type="InterPro" id="IPR042109">
    <property type="entry name" value="Adenylosuccinate_synth_dom1"/>
</dbReference>
<dbReference type="InterPro" id="IPR042110">
    <property type="entry name" value="Adenylosuccinate_synth_dom2"/>
</dbReference>
<dbReference type="InterPro" id="IPR042111">
    <property type="entry name" value="Adenylosuccinate_synth_dom3"/>
</dbReference>
<dbReference type="InterPro" id="IPR001114">
    <property type="entry name" value="Adenylosuccinate_synthetase"/>
</dbReference>
<dbReference type="InterPro" id="IPR027417">
    <property type="entry name" value="P-loop_NTPase"/>
</dbReference>
<dbReference type="NCBIfam" id="NF002223">
    <property type="entry name" value="PRK01117.1"/>
    <property type="match status" value="1"/>
</dbReference>
<dbReference type="NCBIfam" id="TIGR00184">
    <property type="entry name" value="purA"/>
    <property type="match status" value="1"/>
</dbReference>
<dbReference type="PANTHER" id="PTHR11846">
    <property type="entry name" value="ADENYLOSUCCINATE SYNTHETASE"/>
    <property type="match status" value="1"/>
</dbReference>
<dbReference type="PANTHER" id="PTHR11846:SF0">
    <property type="entry name" value="ADENYLOSUCCINATE SYNTHETASE"/>
    <property type="match status" value="1"/>
</dbReference>
<dbReference type="Pfam" id="PF00709">
    <property type="entry name" value="Adenylsucc_synt"/>
    <property type="match status" value="1"/>
</dbReference>
<dbReference type="SMART" id="SM00788">
    <property type="entry name" value="Adenylsucc_synt"/>
    <property type="match status" value="1"/>
</dbReference>
<dbReference type="SUPFAM" id="SSF52540">
    <property type="entry name" value="P-loop containing nucleoside triphosphate hydrolases"/>
    <property type="match status" value="1"/>
</dbReference>
<dbReference type="PROSITE" id="PS01266">
    <property type="entry name" value="ADENYLOSUCCIN_SYN_1"/>
    <property type="match status" value="1"/>
</dbReference>
<dbReference type="PROSITE" id="PS00513">
    <property type="entry name" value="ADENYLOSUCCIN_SYN_2"/>
    <property type="match status" value="1"/>
</dbReference>
<accession>Q6ACB0</accession>
<evidence type="ECO:0000255" key="1">
    <source>
        <dbReference type="HAMAP-Rule" id="MF_00011"/>
    </source>
</evidence>
<sequence>MPAIVIIGAQWGDEGKGKATDLLGSRIDYVVKFNGGNNAGHTVVVGDEKYALHLLPSGILTGGVTPVIANGVVVDLDVLFQELDGLIARGVDVSRLKISSNAHVITHYHRTIDKVTERFLGKRQIGTTGRGIGPTYADKINRVGIRIQDLFDENILRQKVEGALDQKNHLLVKVYNRRAIGLDEIVDDLLSYAERLRPMVVDSSLLLHQALEDGKYVLFEGGQATMLDVDHGTYPFVTSSSSTSGGAATGSGIGPNRIDRVIGIVKAYTTRVGSGPFPTELFDEWGEFLRERGFEFGTTTGRPRRTGWYDAPIARYTARVNGVTDFVLTKLDTLTGIERIPVCVAYDVDGVRHDEVPASQSDFHHAKPIYEEFPGWTEDISGARRFEDLPKNAQDYTHALERMSGARISAIGVGPARDEIVVRHDLVGEAPSPADASR</sequence>